<accession>C0PW71</accession>
<keyword id="KW-0963">Cytoplasm</keyword>
<keyword id="KW-0489">Methyltransferase</keyword>
<keyword id="KW-0698">rRNA processing</keyword>
<keyword id="KW-0949">S-adenosyl-L-methionine</keyword>
<keyword id="KW-0808">Transferase</keyword>
<name>RLMH_SALPC</name>
<feature type="chain" id="PRO_1000199827" description="Ribosomal RNA large subunit methyltransferase H">
    <location>
        <begin position="1"/>
        <end position="155"/>
    </location>
</feature>
<feature type="binding site" evidence="1">
    <location>
        <position position="72"/>
    </location>
    <ligand>
        <name>S-adenosyl-L-methionine</name>
        <dbReference type="ChEBI" id="CHEBI:59789"/>
    </ligand>
</feature>
<feature type="binding site" evidence="1">
    <location>
        <position position="103"/>
    </location>
    <ligand>
        <name>S-adenosyl-L-methionine</name>
        <dbReference type="ChEBI" id="CHEBI:59789"/>
    </ligand>
</feature>
<feature type="binding site" evidence="1">
    <location>
        <begin position="122"/>
        <end position="127"/>
    </location>
    <ligand>
        <name>S-adenosyl-L-methionine</name>
        <dbReference type="ChEBI" id="CHEBI:59789"/>
    </ligand>
</feature>
<organism>
    <name type="scientific">Salmonella paratyphi C (strain RKS4594)</name>
    <dbReference type="NCBI Taxonomy" id="476213"/>
    <lineage>
        <taxon>Bacteria</taxon>
        <taxon>Pseudomonadati</taxon>
        <taxon>Pseudomonadota</taxon>
        <taxon>Gammaproteobacteria</taxon>
        <taxon>Enterobacterales</taxon>
        <taxon>Enterobacteriaceae</taxon>
        <taxon>Salmonella</taxon>
    </lineage>
</organism>
<reference key="1">
    <citation type="journal article" date="2009" name="PLoS ONE">
        <title>Salmonella paratyphi C: genetic divergence from Salmonella choleraesuis and pathogenic convergence with Salmonella typhi.</title>
        <authorList>
            <person name="Liu W.-Q."/>
            <person name="Feng Y."/>
            <person name="Wang Y."/>
            <person name="Zou Q.-H."/>
            <person name="Chen F."/>
            <person name="Guo J.-T."/>
            <person name="Peng Y.-H."/>
            <person name="Jin Y."/>
            <person name="Li Y.-G."/>
            <person name="Hu S.-N."/>
            <person name="Johnston R.N."/>
            <person name="Liu G.-R."/>
            <person name="Liu S.-L."/>
        </authorList>
    </citation>
    <scope>NUCLEOTIDE SEQUENCE [LARGE SCALE GENOMIC DNA]</scope>
    <source>
        <strain>RKS4594</strain>
    </source>
</reference>
<comment type="function">
    <text evidence="1">Specifically methylates the pseudouridine at position 1915 (m3Psi1915) in 23S rRNA.</text>
</comment>
<comment type="catalytic activity">
    <reaction evidence="1">
        <text>pseudouridine(1915) in 23S rRNA + S-adenosyl-L-methionine = N(3)-methylpseudouridine(1915) in 23S rRNA + S-adenosyl-L-homocysteine + H(+)</text>
        <dbReference type="Rhea" id="RHEA:42752"/>
        <dbReference type="Rhea" id="RHEA-COMP:10221"/>
        <dbReference type="Rhea" id="RHEA-COMP:10222"/>
        <dbReference type="ChEBI" id="CHEBI:15378"/>
        <dbReference type="ChEBI" id="CHEBI:57856"/>
        <dbReference type="ChEBI" id="CHEBI:59789"/>
        <dbReference type="ChEBI" id="CHEBI:65314"/>
        <dbReference type="ChEBI" id="CHEBI:74486"/>
        <dbReference type="EC" id="2.1.1.177"/>
    </reaction>
</comment>
<comment type="subunit">
    <text evidence="1">Homodimer.</text>
</comment>
<comment type="subcellular location">
    <subcellularLocation>
        <location evidence="1">Cytoplasm</location>
    </subcellularLocation>
</comment>
<comment type="similarity">
    <text evidence="1">Belongs to the RNA methyltransferase RlmH family.</text>
</comment>
<sequence>MKLQLVAVGTKMPDWVQTGFTEYLRRFPKDMPFELIEIPAGKRGKNADIKRILDKEGEQMLAAAGKNRIVTLDIPGKPWDTPQLANELERWKQDGRDVSLLIGGPEGLSPACKAAAEQSWSLSALTLPHPLVRVLVAESLYRAWSITTNHPYHRE</sequence>
<proteinExistence type="inferred from homology"/>
<dbReference type="EC" id="2.1.1.177" evidence="1"/>
<dbReference type="EMBL" id="CP000857">
    <property type="protein sequence ID" value="ACN44834.1"/>
    <property type="molecule type" value="Genomic_DNA"/>
</dbReference>
<dbReference type="RefSeq" id="WP_000776107.1">
    <property type="nucleotide sequence ID" value="NC_012125.1"/>
</dbReference>
<dbReference type="SMR" id="C0PW71"/>
<dbReference type="GeneID" id="66755108"/>
<dbReference type="KEGG" id="sei:SPC_0657"/>
<dbReference type="HOGENOM" id="CLU_100552_1_0_6"/>
<dbReference type="Proteomes" id="UP000001599">
    <property type="component" value="Chromosome"/>
</dbReference>
<dbReference type="GO" id="GO:0005737">
    <property type="term" value="C:cytoplasm"/>
    <property type="evidence" value="ECO:0007669"/>
    <property type="project" value="UniProtKB-SubCell"/>
</dbReference>
<dbReference type="GO" id="GO:0070038">
    <property type="term" value="F:rRNA (pseudouridine-N3-)-methyltransferase activity"/>
    <property type="evidence" value="ECO:0007669"/>
    <property type="project" value="UniProtKB-UniRule"/>
</dbReference>
<dbReference type="CDD" id="cd18081">
    <property type="entry name" value="RlmH-like"/>
    <property type="match status" value="1"/>
</dbReference>
<dbReference type="FunFam" id="3.40.1280.10:FF:000004">
    <property type="entry name" value="Ribosomal RNA large subunit methyltransferase H"/>
    <property type="match status" value="1"/>
</dbReference>
<dbReference type="Gene3D" id="3.40.1280.10">
    <property type="match status" value="1"/>
</dbReference>
<dbReference type="HAMAP" id="MF_00658">
    <property type="entry name" value="23SrRNA_methyltr_H"/>
    <property type="match status" value="1"/>
</dbReference>
<dbReference type="InterPro" id="IPR029028">
    <property type="entry name" value="Alpha/beta_knot_MTases"/>
</dbReference>
<dbReference type="InterPro" id="IPR003742">
    <property type="entry name" value="RlmH-like"/>
</dbReference>
<dbReference type="InterPro" id="IPR029026">
    <property type="entry name" value="tRNA_m1G_MTases_N"/>
</dbReference>
<dbReference type="NCBIfam" id="NF000984">
    <property type="entry name" value="PRK00103.1-1"/>
    <property type="match status" value="1"/>
</dbReference>
<dbReference type="NCBIfam" id="NF000986">
    <property type="entry name" value="PRK00103.1-4"/>
    <property type="match status" value="1"/>
</dbReference>
<dbReference type="NCBIfam" id="TIGR00246">
    <property type="entry name" value="tRNA_RlmH_YbeA"/>
    <property type="match status" value="1"/>
</dbReference>
<dbReference type="PANTHER" id="PTHR33603">
    <property type="entry name" value="METHYLTRANSFERASE"/>
    <property type="match status" value="1"/>
</dbReference>
<dbReference type="PANTHER" id="PTHR33603:SF1">
    <property type="entry name" value="RIBOSOMAL RNA LARGE SUBUNIT METHYLTRANSFERASE H"/>
    <property type="match status" value="1"/>
</dbReference>
<dbReference type="Pfam" id="PF02590">
    <property type="entry name" value="SPOUT_MTase"/>
    <property type="match status" value="1"/>
</dbReference>
<dbReference type="PIRSF" id="PIRSF004505">
    <property type="entry name" value="MT_bac"/>
    <property type="match status" value="1"/>
</dbReference>
<dbReference type="SUPFAM" id="SSF75217">
    <property type="entry name" value="alpha/beta knot"/>
    <property type="match status" value="1"/>
</dbReference>
<evidence type="ECO:0000255" key="1">
    <source>
        <dbReference type="HAMAP-Rule" id="MF_00658"/>
    </source>
</evidence>
<protein>
    <recommendedName>
        <fullName evidence="1">Ribosomal RNA large subunit methyltransferase H</fullName>
        <ecNumber evidence="1">2.1.1.177</ecNumber>
    </recommendedName>
    <alternativeName>
        <fullName evidence="1">23S rRNA (pseudouridine1915-N3)-methyltransferase</fullName>
    </alternativeName>
    <alternativeName>
        <fullName evidence="1">23S rRNA m3Psi1915 methyltransferase</fullName>
    </alternativeName>
    <alternativeName>
        <fullName evidence="1">rRNA (pseudouridine-N3-)-methyltransferase RlmH</fullName>
    </alternativeName>
</protein>
<gene>
    <name evidence="1" type="primary">rlmH</name>
    <name type="ordered locus">SPC_0657</name>
</gene>